<keyword id="KW-0256">Endoplasmic reticulum</keyword>
<keyword id="KW-0472">Membrane</keyword>
<keyword id="KW-0524">Neurogenesis</keyword>
<keyword id="KW-1185">Reference proteome</keyword>
<keyword id="KW-0812">Transmembrane</keyword>
<keyword id="KW-1133">Transmembrane helix</keyword>
<name>TUNAR_HUMAN</name>
<reference evidence="9" key="1">
    <citation type="journal article" date="2003" name="Nature">
        <title>The DNA sequence and analysis of human chromosome 14.</title>
        <authorList>
            <person name="Heilig R."/>
            <person name="Eckenberg R."/>
            <person name="Petit J.-L."/>
            <person name="Fonknechten N."/>
            <person name="Da Silva C."/>
            <person name="Cattolico L."/>
            <person name="Levy M."/>
            <person name="Barbe V."/>
            <person name="De Berardinis V."/>
            <person name="Ureta-Vidal A."/>
            <person name="Pelletier E."/>
            <person name="Vico V."/>
            <person name="Anthouard V."/>
            <person name="Rowen L."/>
            <person name="Madan A."/>
            <person name="Qin S."/>
            <person name="Sun H."/>
            <person name="Du H."/>
            <person name="Pepin K."/>
            <person name="Artiguenave F."/>
            <person name="Robert C."/>
            <person name="Cruaud C."/>
            <person name="Bruels T."/>
            <person name="Jaillon O."/>
            <person name="Friedlander L."/>
            <person name="Samson G."/>
            <person name="Brottier P."/>
            <person name="Cure S."/>
            <person name="Segurens B."/>
            <person name="Aniere F."/>
            <person name="Samain S."/>
            <person name="Crespeau H."/>
            <person name="Abbasi N."/>
            <person name="Aiach N."/>
            <person name="Boscus D."/>
            <person name="Dickhoff R."/>
            <person name="Dors M."/>
            <person name="Dubois I."/>
            <person name="Friedman C."/>
            <person name="Gouyvenoux M."/>
            <person name="James R."/>
            <person name="Madan A."/>
            <person name="Mairey-Estrada B."/>
            <person name="Mangenot S."/>
            <person name="Martins N."/>
            <person name="Menard M."/>
            <person name="Oztas S."/>
            <person name="Ratcliffe A."/>
            <person name="Shaffer T."/>
            <person name="Trask B."/>
            <person name="Vacherie B."/>
            <person name="Bellemere C."/>
            <person name="Belser C."/>
            <person name="Besnard-Gonnet M."/>
            <person name="Bartol-Mavel D."/>
            <person name="Boutard M."/>
            <person name="Briez-Silla S."/>
            <person name="Combette S."/>
            <person name="Dufosse-Laurent V."/>
            <person name="Ferron C."/>
            <person name="Lechaplais C."/>
            <person name="Louesse C."/>
            <person name="Muselet D."/>
            <person name="Magdelenat G."/>
            <person name="Pateau E."/>
            <person name="Petit E."/>
            <person name="Sirvain-Trukniewicz P."/>
            <person name="Trybou A."/>
            <person name="Vega-Czarny N."/>
            <person name="Bataille E."/>
            <person name="Bluet E."/>
            <person name="Bordelais I."/>
            <person name="Dubois M."/>
            <person name="Dumont C."/>
            <person name="Guerin T."/>
            <person name="Haffray S."/>
            <person name="Hammadi R."/>
            <person name="Muanga J."/>
            <person name="Pellouin V."/>
            <person name="Robert D."/>
            <person name="Wunderle E."/>
            <person name="Gauguet G."/>
            <person name="Roy A."/>
            <person name="Sainte-Marthe L."/>
            <person name="Verdier J."/>
            <person name="Verdier-Discala C."/>
            <person name="Hillier L.W."/>
            <person name="Fulton L."/>
            <person name="McPherson J."/>
            <person name="Matsuda F."/>
            <person name="Wilson R."/>
            <person name="Scarpelli C."/>
            <person name="Gyapay G."/>
            <person name="Wincker P."/>
            <person name="Saurin W."/>
            <person name="Quetier F."/>
            <person name="Waterston R."/>
            <person name="Hood L."/>
            <person name="Weissenbach J."/>
        </authorList>
    </citation>
    <scope>NUCLEOTIDE SEQUENCE [LARGE SCALE GENOMIC DNA]</scope>
</reference>
<reference evidence="7" key="2">
    <citation type="submission" date="2005-07" db="EMBL/GenBank/DDBJ databases">
        <authorList>
            <person name="Mural R.J."/>
            <person name="Istrail S."/>
            <person name="Sutton G."/>
            <person name="Florea L."/>
            <person name="Halpern A.L."/>
            <person name="Mobarry C.M."/>
            <person name="Lippert R."/>
            <person name="Walenz B."/>
            <person name="Shatkay H."/>
            <person name="Dew I."/>
            <person name="Miller J.R."/>
            <person name="Flanigan M.J."/>
            <person name="Edwards N.J."/>
            <person name="Bolanos R."/>
            <person name="Fasulo D."/>
            <person name="Halldorsson B.V."/>
            <person name="Hannenhalli S."/>
            <person name="Turner R."/>
            <person name="Yooseph S."/>
            <person name="Lu F."/>
            <person name="Nusskern D.R."/>
            <person name="Shue B.C."/>
            <person name="Zheng X.H."/>
            <person name="Zhong F."/>
            <person name="Delcher A.L."/>
            <person name="Huson D.H."/>
            <person name="Kravitz S.A."/>
            <person name="Mouchard L."/>
            <person name="Reinert K."/>
            <person name="Remington K.A."/>
            <person name="Clark A.G."/>
            <person name="Waterman M.S."/>
            <person name="Eichler E.E."/>
            <person name="Adams M.D."/>
            <person name="Hunkapiller M.W."/>
            <person name="Myers E.W."/>
            <person name="Venter J.C."/>
        </authorList>
    </citation>
    <scope>NUCLEOTIDE SEQUENCE [LARGE SCALE GENOMIC DNA]</scope>
</reference>
<reference evidence="6" key="3">
    <citation type="journal article" date="2021" name="Mol. Ther. Nucleic Acids">
        <title>A putative long noncoding RNA-encoded micropeptide maintains cellular homeostasis in pancreatic beta cells.</title>
        <authorList>
            <person name="Li M."/>
            <person name="Shao F."/>
            <person name="Qian Q."/>
            <person name="Yu W."/>
            <person name="Zhang Z."/>
            <person name="Chen B."/>
            <person name="Su D."/>
            <person name="Guo Y."/>
            <person name="Phan A.V."/>
            <person name="Song L.S."/>
            <person name="Stephens S.B."/>
            <person name="Sebag J."/>
            <person name="Imai Y."/>
            <person name="Yang L."/>
            <person name="Cao H."/>
        </authorList>
    </citation>
    <scope>FUNCTION</scope>
    <scope>INTERACTION WITH ATP2A3</scope>
    <scope>SUBCELLULAR LOCATION</scope>
    <scope>TISSUE SPECIFICITY</scope>
</reference>
<protein>
    <recommendedName>
        <fullName evidence="6">Protein TUNAR</fullName>
        <shortName evidence="1">pTUNAR</shortName>
    </recommendedName>
    <alternativeName>
        <fullName evidence="5">Beta cell and neural cell-regulin</fullName>
        <shortName evidence="5">BNLN</shortName>
    </alternativeName>
    <alternativeName>
        <fullName evidence="8">TCL1 upstream neural differentiation-associated RNA</fullName>
    </alternativeName>
</protein>
<accession>A0A1B0GTB2</accession>
<accession>A0A1B0GUV0</accession>
<dbReference type="EMBL" id="AL133167">
    <property type="status" value="NOT_ANNOTATED_CDS"/>
    <property type="molecule type" value="Genomic_DNA"/>
</dbReference>
<dbReference type="EMBL" id="CH471061">
    <property type="protein sequence ID" value="EAW81624.1"/>
    <property type="molecule type" value="Genomic_DNA"/>
</dbReference>
<dbReference type="RefSeq" id="NP_001403061.1">
    <property type="nucleotide sequence ID" value="NM_001416132.1"/>
</dbReference>
<dbReference type="RefSeq" id="NP_001403062.1">
    <property type="nucleotide sequence ID" value="NM_001416133.1"/>
</dbReference>
<dbReference type="SMR" id="A0A1B0GTB2"/>
<dbReference type="FunCoup" id="A0A1B0GTB2">
    <property type="interactions" value="16"/>
</dbReference>
<dbReference type="STRING" id="9606.ENSP00000489624"/>
<dbReference type="BioMuta" id="TUNAR"/>
<dbReference type="Ensembl" id="ENST00000504119.1">
    <property type="protein sequence ID" value="ENSP00000498192.1"/>
    <property type="gene ID" value="ENSG00000250366.4"/>
</dbReference>
<dbReference type="Ensembl" id="ENST00000554321.1">
    <property type="protein sequence ID" value="ENSP00000490254.2"/>
    <property type="gene ID" value="ENSG00000250366.4"/>
</dbReference>
<dbReference type="Ensembl" id="ENST00000678517.2">
    <property type="protein sequence ID" value="ENSP00000504015.2"/>
    <property type="gene ID" value="ENSG00000250366.4"/>
</dbReference>
<dbReference type="Ensembl" id="ENST00000687554.1">
    <property type="protein sequence ID" value="ENSP00000510004.1"/>
    <property type="gene ID" value="ENSG00000250366.4"/>
</dbReference>
<dbReference type="GeneID" id="100507043"/>
<dbReference type="AGR" id="HGNC:44088"/>
<dbReference type="GeneCards" id="TUNAR"/>
<dbReference type="HGNC" id="HGNC:44088">
    <property type="gene designation" value="TUNAR"/>
</dbReference>
<dbReference type="HPA" id="ENSG00000250366">
    <property type="expression patterns" value="Tissue enhanced (brain, endometrium, fallopian tube, retina)"/>
</dbReference>
<dbReference type="OpenTargets" id="ENSG00000250366"/>
<dbReference type="VEuPathDB" id="HostDB:ENSG00000250366"/>
<dbReference type="GeneTree" id="ENSGT01110000267272"/>
<dbReference type="OMA" id="VLTKMVI"/>
<dbReference type="OrthoDB" id="8932998at2759"/>
<dbReference type="PAN-GO" id="A0A1B0GTB2">
    <property type="GO annotations" value="2 GO annotations based on evolutionary models"/>
</dbReference>
<dbReference type="ChiTaRS" id="TUNAR">
    <property type="organism name" value="human"/>
</dbReference>
<dbReference type="PRO" id="PR:A0A1B0GTB2"/>
<dbReference type="Proteomes" id="UP000005640">
    <property type="component" value="Chromosome 14"/>
</dbReference>
<dbReference type="Bgee" id="ENSG00000250366">
    <property type="expression patterns" value="Expressed in putamen and 92 other cell types or tissues"/>
</dbReference>
<dbReference type="GO" id="GO:0005783">
    <property type="term" value="C:endoplasmic reticulum"/>
    <property type="evidence" value="ECO:0000314"/>
    <property type="project" value="UniProtKB"/>
</dbReference>
<dbReference type="GO" id="GO:0005789">
    <property type="term" value="C:endoplasmic reticulum membrane"/>
    <property type="evidence" value="ECO:0007669"/>
    <property type="project" value="UniProtKB-SubCell"/>
</dbReference>
<dbReference type="GO" id="GO:0051117">
    <property type="term" value="F:ATPase binding"/>
    <property type="evidence" value="ECO:0000353"/>
    <property type="project" value="UniProtKB"/>
</dbReference>
<dbReference type="GO" id="GO:0032469">
    <property type="term" value="P:endoplasmic reticulum calcium ion homeostasis"/>
    <property type="evidence" value="ECO:0000314"/>
    <property type="project" value="UniProtKB"/>
</dbReference>
<dbReference type="GO" id="GO:0045665">
    <property type="term" value="P:negative regulation of neuron differentiation"/>
    <property type="evidence" value="ECO:0000250"/>
    <property type="project" value="UniProtKB"/>
</dbReference>
<dbReference type="GO" id="GO:0048812">
    <property type="term" value="P:neuron projection morphogenesis"/>
    <property type="evidence" value="ECO:0000250"/>
    <property type="project" value="UniProtKB"/>
</dbReference>
<dbReference type="GO" id="GO:0035774">
    <property type="term" value="P:positive regulation of insulin secretion involved in cellular response to glucose stimulus"/>
    <property type="evidence" value="ECO:0000314"/>
    <property type="project" value="UniProtKB"/>
</dbReference>
<dbReference type="GO" id="GO:0051480">
    <property type="term" value="P:regulation of cytosolic calcium ion concentration"/>
    <property type="evidence" value="ECO:0000250"/>
    <property type="project" value="UniProtKB"/>
</dbReference>
<dbReference type="InterPro" id="IPR054138">
    <property type="entry name" value="TUNAR"/>
</dbReference>
<dbReference type="Pfam" id="PF21954">
    <property type="entry name" value="TUNAR"/>
    <property type="match status" value="1"/>
</dbReference>
<proteinExistence type="evidence at protein level"/>
<comment type="function">
    <text evidence="1 4">In neurons, plays a role in the regulation of intracellular Ca(2+), possibly by acting as an activator of ATP2A2/SERCA2, thus increasing the efficiency with which Ca(2+) is removed from the cytoplasm (By similarity). Inhibits differentiation of embryonic stem cells into neurons and inhibits neurite outgrowth, likely as a result of its role in intracellular Ca(2+) regulation (By similarity). In pancreatic beta cells, lowers Ca(2+) levels in the endoplasmic reticulum and enhances glucose-stimulated insulin secretion (PubMed:34513312).</text>
</comment>
<comment type="subunit">
    <text evidence="1 4">Interacts with ATPase ATP2A2/SERCA2 (By similarity). Interacts with ATPase ATP2A3/SERCA3; the interaction occurs at low levels in low glucose conditions and is increased by high glucose levels (PubMed:34513312).</text>
</comment>
<comment type="subcellular location">
    <subcellularLocation>
        <location evidence="4">Endoplasmic reticulum membrane</location>
        <topology evidence="2">Single-pass membrane protein</topology>
    </subcellularLocation>
    <subcellularLocation>
        <location evidence="1">Extracellular vesicle membrane</location>
        <topology evidence="2">Single-pass membrane protein</topology>
    </subcellularLocation>
</comment>
<comment type="tissue specificity">
    <text evidence="4">Highly expressed in pancreatic islets where it is enriched in the insulin-producing beta cells.</text>
</comment>
<evidence type="ECO:0000250" key="1">
    <source>
        <dbReference type="UniProtKB" id="A0A1B0GQX2"/>
    </source>
</evidence>
<evidence type="ECO:0000255" key="2"/>
<evidence type="ECO:0000256" key="3">
    <source>
        <dbReference type="SAM" id="MobiDB-lite"/>
    </source>
</evidence>
<evidence type="ECO:0000269" key="4">
    <source>
    </source>
</evidence>
<evidence type="ECO:0000303" key="5">
    <source>
    </source>
</evidence>
<evidence type="ECO:0000305" key="6"/>
<evidence type="ECO:0000312" key="7">
    <source>
        <dbReference type="EMBL" id="EAW81624.1"/>
    </source>
</evidence>
<evidence type="ECO:0000312" key="8">
    <source>
        <dbReference type="HGNC" id="HGNC:44088"/>
    </source>
</evidence>
<evidence type="ECO:0000312" key="9">
    <source>
        <dbReference type="Proteomes" id="UP000005640"/>
    </source>
</evidence>
<gene>
    <name evidence="8" type="primary">TUNAR</name>
</gene>
<organism evidence="9">
    <name type="scientific">Homo sapiens</name>
    <name type="common">Human</name>
    <dbReference type="NCBI Taxonomy" id="9606"/>
    <lineage>
        <taxon>Eukaryota</taxon>
        <taxon>Metazoa</taxon>
        <taxon>Chordata</taxon>
        <taxon>Craniata</taxon>
        <taxon>Vertebrata</taxon>
        <taxon>Euteleostomi</taxon>
        <taxon>Mammalia</taxon>
        <taxon>Eutheria</taxon>
        <taxon>Euarchontoglires</taxon>
        <taxon>Primates</taxon>
        <taxon>Haplorrhini</taxon>
        <taxon>Catarrhini</taxon>
        <taxon>Hominidae</taxon>
        <taxon>Homo</taxon>
    </lineage>
</organism>
<feature type="chain" id="PRO_0000455681" description="Protein TUNAR">
    <location>
        <begin position="1"/>
        <end position="48"/>
    </location>
</feature>
<feature type="transmembrane region" description="Helical" evidence="2">
    <location>
        <begin position="24"/>
        <end position="44"/>
    </location>
</feature>
<feature type="region of interest" description="Disordered" evidence="3">
    <location>
        <begin position="1"/>
        <end position="20"/>
    </location>
</feature>
<feature type="compositionally biased region" description="Basic and acidic residues" evidence="3">
    <location>
        <begin position="10"/>
        <end position="20"/>
    </location>
</feature>
<sequence>MVITSENDEDRGGQEKESKEESVLAMLGIIGTILNLIVIIFVYIYTTL</sequence>